<evidence type="ECO:0000255" key="1">
    <source>
        <dbReference type="HAMAP-Rule" id="MF_00023"/>
    </source>
</evidence>
<feature type="chain" id="PRO_0000102947" description="SsrA-binding protein">
    <location>
        <begin position="1"/>
        <end position="154"/>
    </location>
</feature>
<accession>P59630</accession>
<gene>
    <name evidence="1" type="primary">smpB</name>
    <name type="ordered locus">EF_2616</name>
</gene>
<name>SSRP_ENTFA</name>
<organism>
    <name type="scientific">Enterococcus faecalis (strain ATCC 700802 / V583)</name>
    <dbReference type="NCBI Taxonomy" id="226185"/>
    <lineage>
        <taxon>Bacteria</taxon>
        <taxon>Bacillati</taxon>
        <taxon>Bacillota</taxon>
        <taxon>Bacilli</taxon>
        <taxon>Lactobacillales</taxon>
        <taxon>Enterococcaceae</taxon>
        <taxon>Enterococcus</taxon>
    </lineage>
</organism>
<sequence length="154" mass="17732">MPKGEGKLIAQNRKARHDYSIIDTVEAGLVLQGTEIKSIRNGRINLKDGFARIRNGEAFLYNVHISPYEQGNIFNHDPLRTRKLLLHKKQINKLIGETKNTGITLVPLKVYIKDGYAKVLIGLAKGKKQYDKREDLKRKEVDRQISRTLKNNRR</sequence>
<keyword id="KW-0963">Cytoplasm</keyword>
<keyword id="KW-1185">Reference proteome</keyword>
<keyword id="KW-0694">RNA-binding</keyword>
<dbReference type="EMBL" id="AE016830">
    <property type="protein sequence ID" value="AAO82325.1"/>
    <property type="molecule type" value="Genomic_DNA"/>
</dbReference>
<dbReference type="RefSeq" id="NP_816255.1">
    <property type="nucleotide sequence ID" value="NC_004668.1"/>
</dbReference>
<dbReference type="RefSeq" id="WP_002356550.1">
    <property type="nucleotide sequence ID" value="NZ_KE136528.1"/>
</dbReference>
<dbReference type="SMR" id="P59630"/>
<dbReference type="STRING" id="226185.EF_2616"/>
<dbReference type="EnsemblBacteria" id="AAO82325">
    <property type="protein sequence ID" value="AAO82325"/>
    <property type="gene ID" value="EF_2616"/>
</dbReference>
<dbReference type="GeneID" id="60894617"/>
<dbReference type="KEGG" id="efa:EF2616"/>
<dbReference type="PATRIC" id="fig|226185.45.peg.941"/>
<dbReference type="eggNOG" id="COG0691">
    <property type="taxonomic scope" value="Bacteria"/>
</dbReference>
<dbReference type="HOGENOM" id="CLU_108953_0_0_9"/>
<dbReference type="Proteomes" id="UP000001415">
    <property type="component" value="Chromosome"/>
</dbReference>
<dbReference type="GO" id="GO:0005829">
    <property type="term" value="C:cytosol"/>
    <property type="evidence" value="ECO:0007669"/>
    <property type="project" value="TreeGrafter"/>
</dbReference>
<dbReference type="GO" id="GO:0003723">
    <property type="term" value="F:RNA binding"/>
    <property type="evidence" value="ECO:0007669"/>
    <property type="project" value="UniProtKB-UniRule"/>
</dbReference>
<dbReference type="GO" id="GO:0070929">
    <property type="term" value="P:trans-translation"/>
    <property type="evidence" value="ECO:0007669"/>
    <property type="project" value="UniProtKB-UniRule"/>
</dbReference>
<dbReference type="CDD" id="cd09294">
    <property type="entry name" value="SmpB"/>
    <property type="match status" value="1"/>
</dbReference>
<dbReference type="Gene3D" id="2.40.280.10">
    <property type="match status" value="1"/>
</dbReference>
<dbReference type="HAMAP" id="MF_00023">
    <property type="entry name" value="SmpB"/>
    <property type="match status" value="1"/>
</dbReference>
<dbReference type="InterPro" id="IPR023620">
    <property type="entry name" value="SmpB"/>
</dbReference>
<dbReference type="InterPro" id="IPR000037">
    <property type="entry name" value="SsrA-bd_prot"/>
</dbReference>
<dbReference type="InterPro" id="IPR020081">
    <property type="entry name" value="SsrA-bd_prot_CS"/>
</dbReference>
<dbReference type="NCBIfam" id="NF003843">
    <property type="entry name" value="PRK05422.1"/>
    <property type="match status" value="1"/>
</dbReference>
<dbReference type="NCBIfam" id="TIGR00086">
    <property type="entry name" value="smpB"/>
    <property type="match status" value="1"/>
</dbReference>
<dbReference type="PANTHER" id="PTHR30308:SF2">
    <property type="entry name" value="SSRA-BINDING PROTEIN"/>
    <property type="match status" value="1"/>
</dbReference>
<dbReference type="PANTHER" id="PTHR30308">
    <property type="entry name" value="TMRNA-BINDING COMPONENT OF TRANS-TRANSLATION TAGGING COMPLEX"/>
    <property type="match status" value="1"/>
</dbReference>
<dbReference type="Pfam" id="PF01668">
    <property type="entry name" value="SmpB"/>
    <property type="match status" value="1"/>
</dbReference>
<dbReference type="SUPFAM" id="SSF74982">
    <property type="entry name" value="Small protein B (SmpB)"/>
    <property type="match status" value="1"/>
</dbReference>
<dbReference type="PROSITE" id="PS01317">
    <property type="entry name" value="SSRP"/>
    <property type="match status" value="1"/>
</dbReference>
<reference key="1">
    <citation type="journal article" date="2003" name="Science">
        <title>Role of mobile DNA in the evolution of vancomycin-resistant Enterococcus faecalis.</title>
        <authorList>
            <person name="Paulsen I.T."/>
            <person name="Banerjei L."/>
            <person name="Myers G.S.A."/>
            <person name="Nelson K.E."/>
            <person name="Seshadri R."/>
            <person name="Read T.D."/>
            <person name="Fouts D.E."/>
            <person name="Eisen J.A."/>
            <person name="Gill S.R."/>
            <person name="Heidelberg J.F."/>
            <person name="Tettelin H."/>
            <person name="Dodson R.J."/>
            <person name="Umayam L.A."/>
            <person name="Brinkac L.M."/>
            <person name="Beanan M.J."/>
            <person name="Daugherty S.C."/>
            <person name="DeBoy R.T."/>
            <person name="Durkin S.A."/>
            <person name="Kolonay J.F."/>
            <person name="Madupu R."/>
            <person name="Nelson W.C."/>
            <person name="Vamathevan J.J."/>
            <person name="Tran B."/>
            <person name="Upton J."/>
            <person name="Hansen T."/>
            <person name="Shetty J."/>
            <person name="Khouri H.M."/>
            <person name="Utterback T.R."/>
            <person name="Radune D."/>
            <person name="Ketchum K.A."/>
            <person name="Dougherty B.A."/>
            <person name="Fraser C.M."/>
        </authorList>
    </citation>
    <scope>NUCLEOTIDE SEQUENCE [LARGE SCALE GENOMIC DNA]</scope>
    <source>
        <strain>ATCC 700802 / V583</strain>
    </source>
</reference>
<comment type="function">
    <text evidence="1">Required for rescue of stalled ribosomes mediated by trans-translation. Binds to transfer-messenger RNA (tmRNA), required for stable association of tmRNA with ribosomes. tmRNA and SmpB together mimic tRNA shape, replacing the anticodon stem-loop with SmpB. tmRNA is encoded by the ssrA gene; the 2 termini fold to resemble tRNA(Ala) and it encodes a 'tag peptide', a short internal open reading frame. During trans-translation Ala-aminoacylated tmRNA acts like a tRNA, entering the A-site of stalled ribosomes, displacing the stalled mRNA. The ribosome then switches to translate the ORF on the tmRNA; the nascent peptide is terminated with the 'tag peptide' encoded by the tmRNA and targeted for degradation. The ribosome is freed to recommence translation, which seems to be the essential function of trans-translation.</text>
</comment>
<comment type="subcellular location">
    <subcellularLocation>
        <location evidence="1">Cytoplasm</location>
    </subcellularLocation>
    <text evidence="1">The tmRNA-SmpB complex associates with stalled 70S ribosomes.</text>
</comment>
<comment type="similarity">
    <text evidence="1">Belongs to the SmpB family.</text>
</comment>
<proteinExistence type="inferred from homology"/>
<protein>
    <recommendedName>
        <fullName evidence="1">SsrA-binding protein</fullName>
    </recommendedName>
    <alternativeName>
        <fullName evidence="1">Small protein B</fullName>
    </alternativeName>
</protein>